<geneLocation type="plasmid">
    <name>pTEF1</name>
</geneLocation>
<geneLocation type="plasmid">
    <name>pAD2</name>
</geneLocation>
<reference key="1">
    <citation type="journal article" date="1985" name="J. Bacteriol.">
        <title>Complete nucleotide sequence of macrolide-lincosamide-streptogramin B-resistance transposon Tn917 in Streptococcus faecalis.</title>
        <authorList>
            <person name="Shaw J.H."/>
            <person name="Clewell D.B."/>
        </authorList>
    </citation>
    <scope>NUCLEOTIDE SEQUENCE [GENOMIC DNA]</scope>
    <source>
        <strain>DS16</strain>
        <plasmid>pAD2</plasmid>
        <transposon>Tn917</transposon>
    </source>
</reference>
<reference key="2">
    <citation type="submission" date="2002-06" db="EMBL/GenBank/DDBJ databases">
        <authorList>
            <person name="Flannagan S.E."/>
            <person name="Clewell D.B."/>
        </authorList>
    </citation>
    <scope>SEQUENCE REVISION TO 14</scope>
</reference>
<reference key="3">
    <citation type="journal article" date="2003" name="Science">
        <title>Role of mobile DNA in the evolution of vancomycin-resistant Enterococcus faecalis.</title>
        <authorList>
            <person name="Paulsen I.T."/>
            <person name="Banerjei L."/>
            <person name="Myers G.S.A."/>
            <person name="Nelson K.E."/>
            <person name="Seshadri R."/>
            <person name="Read T.D."/>
            <person name="Fouts D.E."/>
            <person name="Eisen J.A."/>
            <person name="Gill S.R."/>
            <person name="Heidelberg J.F."/>
            <person name="Tettelin H."/>
            <person name="Dodson R.J."/>
            <person name="Umayam L.A."/>
            <person name="Brinkac L.M."/>
            <person name="Beanan M.J."/>
            <person name="Daugherty S.C."/>
            <person name="DeBoy R.T."/>
            <person name="Durkin S.A."/>
            <person name="Kolonay J.F."/>
            <person name="Madupu R."/>
            <person name="Nelson W.C."/>
            <person name="Vamathevan J.J."/>
            <person name="Tran B."/>
            <person name="Upton J."/>
            <person name="Hansen T."/>
            <person name="Shetty J."/>
            <person name="Khouri H.M."/>
            <person name="Utterback T.R."/>
            <person name="Radune D."/>
            <person name="Ketchum K.A."/>
            <person name="Dougherty B.A."/>
            <person name="Fraser C.M."/>
        </authorList>
    </citation>
    <scope>NUCLEOTIDE SEQUENCE [LARGE SCALE GENOMIC DNA]</scope>
    <source>
        <strain>ATCC 700802 / V583</strain>
        <plasmid>pTEF1</plasmid>
    </source>
</reference>
<gene>
    <name type="primary">ermB</name>
    <name type="ordered locus">EF_A0007</name>
</gene>
<proteinExistence type="inferred from homology"/>
<accession>P20173</accession>
<sequence>MNKNIKYSQNFLTSEKVLNQIIKQLNLKETDTVYEIGTGKGHLTTKLAKISKQVTSIELDSHLFNLSSEKLKLNIRVTLIHQDILQFQFPNKQRYKIVGNIPYHLSTQIIKKVVFESHASDIYLIVEEGFYKRTLDIHRTLGLLLHTQVSIQQLLKLPAECFHPKPKVNSVLIKLTRHTTDVPDKYWKLYTYFVSKWVNREYRQLFTKNQFHQAMKHAKVNNLSTVTYEQVLSIFNSYLLFNGRK</sequence>
<organism>
    <name type="scientific">Enterococcus faecalis (strain ATCC 700802 / V583)</name>
    <dbReference type="NCBI Taxonomy" id="226185"/>
    <lineage>
        <taxon>Bacteria</taxon>
        <taxon>Bacillati</taxon>
        <taxon>Bacillota</taxon>
        <taxon>Bacilli</taxon>
        <taxon>Lactobacillales</taxon>
        <taxon>Enterococcaceae</taxon>
        <taxon>Enterococcus</taxon>
    </lineage>
</organism>
<evidence type="ECO:0000255" key="1">
    <source>
        <dbReference type="PROSITE-ProRule" id="PRU01026"/>
    </source>
</evidence>
<comment type="function">
    <text>This protein produces a dimethylation of the adenine residue at position 2085 in 23S rRNA, resulting in reduced affinity between ribosomes and macrolide-lincosamide-streptogramin B antibiotics.</text>
</comment>
<comment type="catalytic activity">
    <reaction>
        <text>adenosine(2085) in 23S rRNA + 2 S-adenosyl-L-methionine = N(6)-dimethyladenosine(2085) in 23S rRNA + 2 S-adenosyl-L-homocysteine + 2 H(+)</text>
        <dbReference type="Rhea" id="RHEA:42784"/>
        <dbReference type="Rhea" id="RHEA-COMP:10237"/>
        <dbReference type="Rhea" id="RHEA-COMP:10238"/>
        <dbReference type="ChEBI" id="CHEBI:15378"/>
        <dbReference type="ChEBI" id="CHEBI:57856"/>
        <dbReference type="ChEBI" id="CHEBI:59789"/>
        <dbReference type="ChEBI" id="CHEBI:74411"/>
        <dbReference type="ChEBI" id="CHEBI:74493"/>
        <dbReference type="EC" id="2.1.1.184"/>
    </reaction>
</comment>
<comment type="similarity">
    <text evidence="1">Belongs to the class I-like SAM-binding methyltransferase superfamily. rRNA adenine N(6)-methyltransferase family.</text>
</comment>
<name>ERMB_ENTFA</name>
<keyword id="KW-0046">Antibiotic resistance</keyword>
<keyword id="KW-0489">Methyltransferase</keyword>
<keyword id="KW-0614">Plasmid</keyword>
<keyword id="KW-1185">Reference proteome</keyword>
<keyword id="KW-0694">RNA-binding</keyword>
<keyword id="KW-0949">S-adenosyl-L-methionine</keyword>
<keyword id="KW-0808">Transferase</keyword>
<keyword id="KW-0814">Transposable element</keyword>
<feature type="chain" id="PRO_0000101689" description="rRNA adenine N-6-methyltransferase">
    <location>
        <begin position="1"/>
        <end position="245"/>
    </location>
</feature>
<feature type="binding site" evidence="1">
    <location>
        <position position="10"/>
    </location>
    <ligand>
        <name>S-adenosyl-L-methionine</name>
        <dbReference type="ChEBI" id="CHEBI:59789"/>
    </ligand>
</feature>
<feature type="binding site" evidence="1">
    <location>
        <position position="12"/>
    </location>
    <ligand>
        <name>S-adenosyl-L-methionine</name>
        <dbReference type="ChEBI" id="CHEBI:59789"/>
    </ligand>
</feature>
<feature type="binding site" evidence="1">
    <location>
        <position position="37"/>
    </location>
    <ligand>
        <name>S-adenosyl-L-methionine</name>
        <dbReference type="ChEBI" id="CHEBI:59789"/>
    </ligand>
</feature>
<feature type="binding site" evidence="1">
    <location>
        <position position="58"/>
    </location>
    <ligand>
        <name>S-adenosyl-L-methionine</name>
        <dbReference type="ChEBI" id="CHEBI:59789"/>
    </ligand>
</feature>
<feature type="binding site" evidence="1">
    <location>
        <position position="83"/>
    </location>
    <ligand>
        <name>S-adenosyl-L-methionine</name>
        <dbReference type="ChEBI" id="CHEBI:59789"/>
    </ligand>
</feature>
<feature type="binding site" evidence="1">
    <location>
        <position position="100"/>
    </location>
    <ligand>
        <name>S-adenosyl-L-methionine</name>
        <dbReference type="ChEBI" id="CHEBI:59789"/>
    </ligand>
</feature>
<protein>
    <recommendedName>
        <fullName>rRNA adenine N-6-methyltransferase</fullName>
        <ecNumber>2.1.1.184</ecNumber>
    </recommendedName>
    <alternativeName>
        <fullName>Macrolide-lincosamide-streptogramin B resistance protein</fullName>
    </alternativeName>
</protein>
<dbReference type="EC" id="2.1.1.184"/>
<dbReference type="EMBL" id="M11180">
    <property type="protein sequence ID" value="AAA27452.2"/>
    <property type="molecule type" value="Genomic_DNA"/>
</dbReference>
<dbReference type="EMBL" id="AE016833">
    <property type="protein sequence ID" value="AAO83009.1"/>
    <property type="molecule type" value="Genomic_DNA"/>
</dbReference>
<dbReference type="PIR" id="B25028">
    <property type="entry name" value="B25028"/>
</dbReference>
<dbReference type="RefSeq" id="NP_816938.1">
    <property type="nucleotide sequence ID" value="NC_004669.1"/>
</dbReference>
<dbReference type="SMR" id="P20173"/>
<dbReference type="EnsemblBacteria" id="AAO83009">
    <property type="protein sequence ID" value="AAO83009"/>
    <property type="gene ID" value="EF_A0007"/>
</dbReference>
<dbReference type="KEGG" id="ag:AAA27452"/>
<dbReference type="KEGG" id="efa:EFA0007"/>
<dbReference type="PATRIC" id="fig|226185.45.peg.2807"/>
<dbReference type="HOGENOM" id="CLU_041220_3_3_9"/>
<dbReference type="PRO" id="PR:P20173"/>
<dbReference type="Proteomes" id="UP000001415">
    <property type="component" value="Plasmid pTEF1"/>
</dbReference>
<dbReference type="GO" id="GO:0005829">
    <property type="term" value="C:cytosol"/>
    <property type="evidence" value="ECO:0007669"/>
    <property type="project" value="TreeGrafter"/>
</dbReference>
<dbReference type="GO" id="GO:0052910">
    <property type="term" value="F:23S rRNA (adenine(2085)-N(6))-dimethyltransferase activity"/>
    <property type="evidence" value="ECO:0007669"/>
    <property type="project" value="UniProtKB-EC"/>
</dbReference>
<dbReference type="GO" id="GO:0003723">
    <property type="term" value="F:RNA binding"/>
    <property type="evidence" value="ECO:0007669"/>
    <property type="project" value="UniProtKB-KW"/>
</dbReference>
<dbReference type="GO" id="GO:0000179">
    <property type="term" value="F:rRNA (adenine-N6,N6-)-dimethyltransferase activity"/>
    <property type="evidence" value="ECO:0007669"/>
    <property type="project" value="InterPro"/>
</dbReference>
<dbReference type="GO" id="GO:0046677">
    <property type="term" value="P:response to antibiotic"/>
    <property type="evidence" value="ECO:0007669"/>
    <property type="project" value="UniProtKB-KW"/>
</dbReference>
<dbReference type="CDD" id="cd02440">
    <property type="entry name" value="AdoMet_MTases"/>
    <property type="match status" value="1"/>
</dbReference>
<dbReference type="Gene3D" id="1.10.8.100">
    <property type="entry name" value="Ribosomal RNA adenine dimethylase-like, domain 2"/>
    <property type="match status" value="1"/>
</dbReference>
<dbReference type="Gene3D" id="3.40.50.150">
    <property type="entry name" value="Vaccinia Virus protein VP39"/>
    <property type="match status" value="1"/>
</dbReference>
<dbReference type="InterPro" id="IPR001737">
    <property type="entry name" value="KsgA/Erm"/>
</dbReference>
<dbReference type="InterPro" id="IPR023165">
    <property type="entry name" value="rRNA_Ade_diMease-like_C"/>
</dbReference>
<dbReference type="InterPro" id="IPR020596">
    <property type="entry name" value="rRNA_Ade_Mease_Trfase_CS"/>
</dbReference>
<dbReference type="InterPro" id="IPR020598">
    <property type="entry name" value="rRNA_Ade_methylase_Trfase_N"/>
</dbReference>
<dbReference type="InterPro" id="IPR029063">
    <property type="entry name" value="SAM-dependent_MTases_sf"/>
</dbReference>
<dbReference type="NCBIfam" id="NF000499">
    <property type="entry name" value="Erm23S_rRNA_broad"/>
    <property type="match status" value="1"/>
</dbReference>
<dbReference type="NCBIfam" id="NF012220">
    <property type="entry name" value="erm_B_23S_MT"/>
    <property type="match status" value="1"/>
</dbReference>
<dbReference type="PANTHER" id="PTHR11727">
    <property type="entry name" value="DIMETHYLADENOSINE TRANSFERASE"/>
    <property type="match status" value="1"/>
</dbReference>
<dbReference type="PANTHER" id="PTHR11727:SF7">
    <property type="entry name" value="DIMETHYLADENOSINE TRANSFERASE-RELATED"/>
    <property type="match status" value="1"/>
</dbReference>
<dbReference type="Pfam" id="PF00398">
    <property type="entry name" value="RrnaAD"/>
    <property type="match status" value="1"/>
</dbReference>
<dbReference type="SMART" id="SM00650">
    <property type="entry name" value="rADc"/>
    <property type="match status" value="1"/>
</dbReference>
<dbReference type="SUPFAM" id="SSF53335">
    <property type="entry name" value="S-adenosyl-L-methionine-dependent methyltransferases"/>
    <property type="match status" value="1"/>
</dbReference>
<dbReference type="PROSITE" id="PS01131">
    <property type="entry name" value="RRNA_A_DIMETH"/>
    <property type="match status" value="1"/>
</dbReference>
<dbReference type="PROSITE" id="PS51689">
    <property type="entry name" value="SAM_RNA_A_N6_MT"/>
    <property type="match status" value="1"/>
</dbReference>